<reference key="1">
    <citation type="journal article" date="2010" name="PLoS Genet.">
        <title>Genome sequence of the plant growth promoting endophytic bacterium Enterobacter sp. 638.</title>
        <authorList>
            <person name="Taghavi S."/>
            <person name="van der Lelie D."/>
            <person name="Hoffman A."/>
            <person name="Zhang Y.B."/>
            <person name="Walla M.D."/>
            <person name="Vangronsveld J."/>
            <person name="Newman L."/>
            <person name="Monchy S."/>
        </authorList>
    </citation>
    <scope>NUCLEOTIDE SEQUENCE [LARGE SCALE GENOMIC DNA]</scope>
    <source>
        <strain>638</strain>
    </source>
</reference>
<evidence type="ECO:0000250" key="1">
    <source>
        <dbReference type="UniProtKB" id="P31677"/>
    </source>
</evidence>
<protein>
    <recommendedName>
        <fullName evidence="1">Trehalose-6-phosphate synthase</fullName>
        <shortName evidence="1">TPS</shortName>
        <ecNumber evidence="1">2.4.1.15</ecNumber>
    </recommendedName>
    <alternativeName>
        <fullName evidence="1">Alpha,alpha-trehalose-phosphate synthase [UDP-forming]</fullName>
    </alternativeName>
    <alternativeName>
        <fullName evidence="1">Osmoregulatory trehalose synthesis protein A</fullName>
        <shortName evidence="1">OtsA</shortName>
    </alternativeName>
    <alternativeName>
        <fullName evidence="1">UDP-glucose-glucosephosphate glucosyltransferase</fullName>
    </alternativeName>
</protein>
<feature type="chain" id="PRO_0000348892" description="Trehalose-6-phosphate synthase">
    <location>
        <begin position="1"/>
        <end position="474"/>
    </location>
</feature>
<feature type="binding site" evidence="1">
    <location>
        <position position="10"/>
    </location>
    <ligand>
        <name>D-glucose 6-phosphate</name>
        <dbReference type="ChEBI" id="CHEBI:61548"/>
    </ligand>
</feature>
<feature type="binding site" evidence="1">
    <location>
        <begin position="22"/>
        <end position="23"/>
    </location>
    <ligand>
        <name>UDP-alpha-D-glucose</name>
        <dbReference type="ChEBI" id="CHEBI:58885"/>
    </ligand>
</feature>
<feature type="binding site" evidence="1">
    <location>
        <position position="77"/>
    </location>
    <ligand>
        <name>D-glucose 6-phosphate</name>
        <dbReference type="ChEBI" id="CHEBI:61548"/>
    </ligand>
</feature>
<feature type="binding site" evidence="1">
    <location>
        <position position="131"/>
    </location>
    <ligand>
        <name>D-glucose 6-phosphate</name>
        <dbReference type="ChEBI" id="CHEBI:61548"/>
    </ligand>
</feature>
<feature type="binding site" evidence="1">
    <location>
        <position position="263"/>
    </location>
    <ligand>
        <name>UDP-alpha-D-glucose</name>
        <dbReference type="ChEBI" id="CHEBI:58885"/>
    </ligand>
</feature>
<feature type="binding site" evidence="1">
    <location>
        <position position="268"/>
    </location>
    <ligand>
        <name>UDP-alpha-D-glucose</name>
        <dbReference type="ChEBI" id="CHEBI:58885"/>
    </ligand>
</feature>
<feature type="binding site" evidence="1">
    <location>
        <position position="301"/>
    </location>
    <ligand>
        <name>D-glucose 6-phosphate</name>
        <dbReference type="ChEBI" id="CHEBI:61548"/>
    </ligand>
</feature>
<feature type="binding site" evidence="1">
    <location>
        <position position="340"/>
    </location>
    <ligand>
        <name>UDP-alpha-D-glucose</name>
        <dbReference type="ChEBI" id="CHEBI:58885"/>
    </ligand>
</feature>
<feature type="binding site" evidence="1">
    <location>
        <begin position="366"/>
        <end position="370"/>
    </location>
    <ligand>
        <name>UDP-alpha-D-glucose</name>
        <dbReference type="ChEBI" id="CHEBI:58885"/>
    </ligand>
</feature>
<feature type="site" description="Involved in alpha anomer selectivity" evidence="1">
    <location>
        <position position="86"/>
    </location>
</feature>
<feature type="site" description="Involved in alpha anomer selectivity" evidence="1">
    <location>
        <position position="156"/>
    </location>
</feature>
<gene>
    <name evidence="1" type="primary">otsA</name>
    <name type="ordered locus">Ent638_2472</name>
</gene>
<name>OTSA_ENT38</name>
<proteinExistence type="inferred from homology"/>
<dbReference type="EC" id="2.4.1.15" evidence="1"/>
<dbReference type="EMBL" id="CP000653">
    <property type="protein sequence ID" value="ABP61141.1"/>
    <property type="molecule type" value="Genomic_DNA"/>
</dbReference>
<dbReference type="RefSeq" id="WP_015959474.1">
    <property type="nucleotide sequence ID" value="NC_009436.1"/>
</dbReference>
<dbReference type="SMR" id="A4WBR1"/>
<dbReference type="STRING" id="399742.Ent638_2472"/>
<dbReference type="CAZy" id="GT20">
    <property type="family name" value="Glycosyltransferase Family 20"/>
</dbReference>
<dbReference type="KEGG" id="ent:Ent638_2472"/>
<dbReference type="eggNOG" id="COG0380">
    <property type="taxonomic scope" value="Bacteria"/>
</dbReference>
<dbReference type="HOGENOM" id="CLU_002351_7_1_6"/>
<dbReference type="OrthoDB" id="9815690at2"/>
<dbReference type="UniPathway" id="UPA00299"/>
<dbReference type="Proteomes" id="UP000000230">
    <property type="component" value="Chromosome"/>
</dbReference>
<dbReference type="GO" id="GO:0003825">
    <property type="term" value="F:alpha,alpha-trehalose-phosphate synthase (UDP-forming) activity"/>
    <property type="evidence" value="ECO:0007669"/>
    <property type="project" value="UniProtKB-EC"/>
</dbReference>
<dbReference type="GO" id="GO:0005992">
    <property type="term" value="P:trehalose biosynthetic process"/>
    <property type="evidence" value="ECO:0007669"/>
    <property type="project" value="UniProtKB-UniPathway"/>
</dbReference>
<dbReference type="CDD" id="cd03788">
    <property type="entry name" value="GT20_TPS"/>
    <property type="match status" value="1"/>
</dbReference>
<dbReference type="FunFam" id="3.40.50.2000:FF:000024">
    <property type="entry name" value="Trehalose-6-phosphate synthase"/>
    <property type="match status" value="1"/>
</dbReference>
<dbReference type="Gene3D" id="3.40.50.2000">
    <property type="entry name" value="Glycogen Phosphorylase B"/>
    <property type="match status" value="2"/>
</dbReference>
<dbReference type="InterPro" id="IPR001830">
    <property type="entry name" value="Glyco_trans_20"/>
</dbReference>
<dbReference type="InterPro" id="IPR012766">
    <property type="entry name" value="Trehalose_OtsA"/>
</dbReference>
<dbReference type="NCBIfam" id="NF007513">
    <property type="entry name" value="PRK10117.1"/>
    <property type="match status" value="1"/>
</dbReference>
<dbReference type="NCBIfam" id="TIGR02400">
    <property type="entry name" value="trehalose_OtsA"/>
    <property type="match status" value="1"/>
</dbReference>
<dbReference type="PANTHER" id="PTHR10788:SF106">
    <property type="entry name" value="BCDNA.GH08860"/>
    <property type="match status" value="1"/>
</dbReference>
<dbReference type="PANTHER" id="PTHR10788">
    <property type="entry name" value="TREHALOSE-6-PHOSPHATE SYNTHASE"/>
    <property type="match status" value="1"/>
</dbReference>
<dbReference type="Pfam" id="PF00982">
    <property type="entry name" value="Glyco_transf_20"/>
    <property type="match status" value="1"/>
</dbReference>
<dbReference type="SUPFAM" id="SSF53756">
    <property type="entry name" value="UDP-Glycosyltransferase/glycogen phosphorylase"/>
    <property type="match status" value="1"/>
</dbReference>
<accession>A4WBR1</accession>
<keyword id="KW-0328">Glycosyltransferase</keyword>
<keyword id="KW-0808">Transferase</keyword>
<sequence>MGRLVVVSNRIAPPDDKKSSAGGLAVGILGALKTAGGLWFGWSGEVGNEDKPLQKVTRGNITWASFNLSEQDHEEYYSQFSNAVLWPAFHYRLDLVKFQRDSWEGYTRVNALLADKLLPLIEEDDILWIHDYHLLPFASELRKRGVNNRIGFFLHIPFPTPEIFTAIPPHEELLEGLCDYDLLGFQTENDRQAFLESVAGKTRLTTHNGKSHQAWGKTFDTEVYPIGIEPDEIAADASGPLPPKLAQLKNELKNVKNIFSVERLDYSKGLPERFQAYERLLEKYPQHHGKIRYTQIAPTSRGEVQAYQDIRHQLETEAGRINGRYGQLGWTPLYYLNQHFERKVLMKVFRYAEVGLVTPLRDGMNLVAKEYVAAQDPKDPGVLVLSQFAGAANELTSALLVNPYDSDDVANALDRALKMPLTERISRHAEMMKVIRENDINHWQETFIRDLKRTTPRSVESNLQKKIATFPKLA</sequence>
<organism>
    <name type="scientific">Enterobacter sp. (strain 638)</name>
    <dbReference type="NCBI Taxonomy" id="399742"/>
    <lineage>
        <taxon>Bacteria</taxon>
        <taxon>Pseudomonadati</taxon>
        <taxon>Pseudomonadota</taxon>
        <taxon>Gammaproteobacteria</taxon>
        <taxon>Enterobacterales</taxon>
        <taxon>Enterobacteriaceae</taxon>
        <taxon>Enterobacter</taxon>
    </lineage>
</organism>
<comment type="function">
    <text evidence="1">Probably involved in the osmoprotection via the biosynthesis of trehalose. Catalyzes the transfer of glucose from UDP-alpha-D-glucose (UDP-Glc) to D-glucose 6-phosphate (Glc-6-P) to form trehalose-6-phosphate. Acts with retention of the anomeric configuration of the UDP-sugar donor.</text>
</comment>
<comment type="catalytic activity">
    <reaction evidence="1">
        <text>D-glucose 6-phosphate + UDP-alpha-D-glucose = alpha,alpha-trehalose 6-phosphate + UDP + H(+)</text>
        <dbReference type="Rhea" id="RHEA:18889"/>
        <dbReference type="ChEBI" id="CHEBI:15378"/>
        <dbReference type="ChEBI" id="CHEBI:58223"/>
        <dbReference type="ChEBI" id="CHEBI:58429"/>
        <dbReference type="ChEBI" id="CHEBI:58885"/>
        <dbReference type="ChEBI" id="CHEBI:61548"/>
        <dbReference type="EC" id="2.4.1.15"/>
    </reaction>
</comment>
<comment type="pathway">
    <text evidence="1">Glycan biosynthesis; trehalose biosynthesis.</text>
</comment>
<comment type="subunit">
    <text evidence="1">Homotetramer.</text>
</comment>
<comment type="similarity">
    <text evidence="1">Belongs to the glycosyltransferase 20 family.</text>
</comment>